<dbReference type="EMBL" id="CP000238">
    <property type="protein sequence ID" value="ABF14129.1"/>
    <property type="molecule type" value="Genomic_DNA"/>
</dbReference>
<dbReference type="RefSeq" id="WP_011520690.1">
    <property type="nucleotide sequence ID" value="NC_007984.1"/>
</dbReference>
<dbReference type="SMR" id="Q1LSV7"/>
<dbReference type="STRING" id="374463.BCI_0527"/>
<dbReference type="KEGG" id="bci:BCI_0527"/>
<dbReference type="HOGENOM" id="CLU_040318_1_2_6"/>
<dbReference type="OrthoDB" id="9808036at2"/>
<dbReference type="Proteomes" id="UP000002427">
    <property type="component" value="Chromosome"/>
</dbReference>
<dbReference type="GO" id="GO:0022627">
    <property type="term" value="C:cytosolic small ribosomal subunit"/>
    <property type="evidence" value="ECO:0007669"/>
    <property type="project" value="TreeGrafter"/>
</dbReference>
<dbReference type="GO" id="GO:0003735">
    <property type="term" value="F:structural constituent of ribosome"/>
    <property type="evidence" value="ECO:0007669"/>
    <property type="project" value="InterPro"/>
</dbReference>
<dbReference type="GO" id="GO:0006412">
    <property type="term" value="P:translation"/>
    <property type="evidence" value="ECO:0007669"/>
    <property type="project" value="UniProtKB-UniRule"/>
</dbReference>
<dbReference type="CDD" id="cd01425">
    <property type="entry name" value="RPS2"/>
    <property type="match status" value="1"/>
</dbReference>
<dbReference type="FunFam" id="1.10.287.610:FF:000001">
    <property type="entry name" value="30S ribosomal protein S2"/>
    <property type="match status" value="1"/>
</dbReference>
<dbReference type="Gene3D" id="3.40.50.10490">
    <property type="entry name" value="Glucose-6-phosphate isomerase like protein, domain 1"/>
    <property type="match status" value="1"/>
</dbReference>
<dbReference type="Gene3D" id="1.10.287.610">
    <property type="entry name" value="Helix hairpin bin"/>
    <property type="match status" value="1"/>
</dbReference>
<dbReference type="HAMAP" id="MF_00291_B">
    <property type="entry name" value="Ribosomal_uS2_B"/>
    <property type="match status" value="1"/>
</dbReference>
<dbReference type="InterPro" id="IPR001865">
    <property type="entry name" value="Ribosomal_uS2"/>
</dbReference>
<dbReference type="InterPro" id="IPR005706">
    <property type="entry name" value="Ribosomal_uS2_bac/mit/plastid"/>
</dbReference>
<dbReference type="InterPro" id="IPR018130">
    <property type="entry name" value="Ribosomal_uS2_CS"/>
</dbReference>
<dbReference type="InterPro" id="IPR023591">
    <property type="entry name" value="Ribosomal_uS2_flav_dom_sf"/>
</dbReference>
<dbReference type="NCBIfam" id="TIGR01011">
    <property type="entry name" value="rpsB_bact"/>
    <property type="match status" value="1"/>
</dbReference>
<dbReference type="PANTHER" id="PTHR12534">
    <property type="entry name" value="30S RIBOSOMAL PROTEIN S2 PROKARYOTIC AND ORGANELLAR"/>
    <property type="match status" value="1"/>
</dbReference>
<dbReference type="PANTHER" id="PTHR12534:SF0">
    <property type="entry name" value="SMALL RIBOSOMAL SUBUNIT PROTEIN US2M"/>
    <property type="match status" value="1"/>
</dbReference>
<dbReference type="Pfam" id="PF00318">
    <property type="entry name" value="Ribosomal_S2"/>
    <property type="match status" value="1"/>
</dbReference>
<dbReference type="PRINTS" id="PR00395">
    <property type="entry name" value="RIBOSOMALS2"/>
</dbReference>
<dbReference type="SUPFAM" id="SSF52313">
    <property type="entry name" value="Ribosomal protein S2"/>
    <property type="match status" value="1"/>
</dbReference>
<dbReference type="PROSITE" id="PS00962">
    <property type="entry name" value="RIBOSOMAL_S2_1"/>
    <property type="match status" value="1"/>
</dbReference>
<dbReference type="PROSITE" id="PS00963">
    <property type="entry name" value="RIBOSOMAL_S2_2"/>
    <property type="match status" value="1"/>
</dbReference>
<accession>Q1LSV7</accession>
<keyword id="KW-1185">Reference proteome</keyword>
<keyword id="KW-0687">Ribonucleoprotein</keyword>
<keyword id="KW-0689">Ribosomal protein</keyword>
<gene>
    <name evidence="1" type="primary">rpsB</name>
    <name type="ordered locus">BCI_0527</name>
</gene>
<reference key="1">
    <citation type="journal article" date="2006" name="PLoS Biol.">
        <title>Metabolic complementarity and genomics of the dual bacterial symbiosis of sharpshooters.</title>
        <authorList>
            <person name="Wu D."/>
            <person name="Daugherty S.C."/>
            <person name="Van Aken S.E."/>
            <person name="Pai G.H."/>
            <person name="Watkins K.L."/>
            <person name="Khouri H."/>
            <person name="Tallon L.J."/>
            <person name="Zaborsky J.M."/>
            <person name="Dunbar H.E."/>
            <person name="Tran P.L."/>
            <person name="Moran N.A."/>
            <person name="Eisen J.A."/>
        </authorList>
    </citation>
    <scope>NUCLEOTIDE SEQUENCE [LARGE SCALE GENOMIC DNA]</scope>
</reference>
<feature type="chain" id="PRO_1000003896" description="Small ribosomal subunit protein uS2">
    <location>
        <begin position="1"/>
        <end position="232"/>
    </location>
</feature>
<proteinExistence type="inferred from homology"/>
<sequence>MVTVLMHDMFHAGVHFGHQTRYWNPRMKPFIFGVRNKIHIINLEQTAPMFNNALFELNKIASRKGKILFVGTKRAASEAIKEAARSCDQFFVNHRWLGGMLTNWKTVRQSIKHLKELETQSQDGTLDKLTKKEAIICNRKLEKLEKSLGGIKDLGGLPDALFVIDAEREKIAVKEANNLGIPVFAVVDTNTDPNGIDFIIPGNDDAIRAINLYLTAVAHAISEGHQKNALEI</sequence>
<organism>
    <name type="scientific">Baumannia cicadellinicola subsp. Homalodisca coagulata</name>
    <dbReference type="NCBI Taxonomy" id="374463"/>
    <lineage>
        <taxon>Bacteria</taxon>
        <taxon>Pseudomonadati</taxon>
        <taxon>Pseudomonadota</taxon>
        <taxon>Gammaproteobacteria</taxon>
        <taxon>Candidatus Palibaumannia</taxon>
    </lineage>
</organism>
<evidence type="ECO:0000255" key="1">
    <source>
        <dbReference type="HAMAP-Rule" id="MF_00291"/>
    </source>
</evidence>
<evidence type="ECO:0000305" key="2"/>
<comment type="similarity">
    <text evidence="1">Belongs to the universal ribosomal protein uS2 family.</text>
</comment>
<name>RS2_BAUCH</name>
<protein>
    <recommendedName>
        <fullName evidence="1">Small ribosomal subunit protein uS2</fullName>
    </recommendedName>
    <alternativeName>
        <fullName evidence="2">30S ribosomal protein S2</fullName>
    </alternativeName>
</protein>